<gene>
    <name evidence="1" type="primary">rrp42</name>
    <name type="ordered locus">MM_2624</name>
</gene>
<proteinExistence type="inferred from homology"/>
<name>RRP42_METMA</name>
<accession>Q8PTT7</accession>
<keyword id="KW-0963">Cytoplasm</keyword>
<keyword id="KW-0271">Exosome</keyword>
<reference key="1">
    <citation type="journal article" date="2002" name="J. Mol. Microbiol. Biotechnol.">
        <title>The genome of Methanosarcina mazei: evidence for lateral gene transfer between Bacteria and Archaea.</title>
        <authorList>
            <person name="Deppenmeier U."/>
            <person name="Johann A."/>
            <person name="Hartsch T."/>
            <person name="Merkl R."/>
            <person name="Schmitz R.A."/>
            <person name="Martinez-Arias R."/>
            <person name="Henne A."/>
            <person name="Wiezer A."/>
            <person name="Baeumer S."/>
            <person name="Jacobi C."/>
            <person name="Brueggemann H."/>
            <person name="Lienard T."/>
            <person name="Christmann A."/>
            <person name="Boemecke M."/>
            <person name="Steckel S."/>
            <person name="Bhattacharyya A."/>
            <person name="Lykidis A."/>
            <person name="Overbeek R."/>
            <person name="Klenk H.-P."/>
            <person name="Gunsalus R.P."/>
            <person name="Fritz H.-J."/>
            <person name="Gottschalk G."/>
        </authorList>
    </citation>
    <scope>NUCLEOTIDE SEQUENCE [LARGE SCALE GENOMIC DNA]</scope>
    <source>
        <strain>ATCC BAA-159 / DSM 3647 / Goe1 / Go1 / JCM 11833 / OCM 88</strain>
    </source>
</reference>
<protein>
    <recommendedName>
        <fullName evidence="1">Exosome complex component Rrp42</fullName>
    </recommendedName>
</protein>
<evidence type="ECO:0000255" key="1">
    <source>
        <dbReference type="HAMAP-Rule" id="MF_00622"/>
    </source>
</evidence>
<comment type="function">
    <text evidence="1">Non-catalytic component of the exosome, which is a complex involved in RNA degradation. Contributes to the structuring of the Rrp41 active site.</text>
</comment>
<comment type="subunit">
    <text evidence="1">Component of the archaeal exosome complex. Forms a hexameric ring-like arrangement composed of 3 Rrp41-Rrp42 heterodimers. The hexameric ring associates with a trimer of Rrp4 and/or Csl4 subunits.</text>
</comment>
<comment type="subcellular location">
    <subcellularLocation>
        <location evidence="1">Cytoplasm</location>
    </subcellularLocation>
</comment>
<comment type="similarity">
    <text evidence="1">Belongs to the RNase PH family. Rrp42 subfamily.</text>
</comment>
<dbReference type="EMBL" id="AE008384">
    <property type="protein sequence ID" value="AAM32320.1"/>
    <property type="molecule type" value="Genomic_DNA"/>
</dbReference>
<dbReference type="RefSeq" id="WP_011034537.1">
    <property type="nucleotide sequence ID" value="NC_003901.1"/>
</dbReference>
<dbReference type="SMR" id="Q8PTT7"/>
<dbReference type="GeneID" id="82161709"/>
<dbReference type="KEGG" id="mma:MM_2624"/>
<dbReference type="PATRIC" id="fig|192952.21.peg.3018"/>
<dbReference type="eggNOG" id="arCOG01574">
    <property type="taxonomic scope" value="Archaea"/>
</dbReference>
<dbReference type="HOGENOM" id="CLU_038194_0_0_2"/>
<dbReference type="Proteomes" id="UP000000595">
    <property type="component" value="Chromosome"/>
</dbReference>
<dbReference type="GO" id="GO:0000177">
    <property type="term" value="C:cytoplasmic exosome (RNase complex)"/>
    <property type="evidence" value="ECO:0007669"/>
    <property type="project" value="TreeGrafter"/>
</dbReference>
<dbReference type="GO" id="GO:0035925">
    <property type="term" value="F:mRNA 3'-UTR AU-rich region binding"/>
    <property type="evidence" value="ECO:0007669"/>
    <property type="project" value="TreeGrafter"/>
</dbReference>
<dbReference type="GO" id="GO:0016075">
    <property type="term" value="P:rRNA catabolic process"/>
    <property type="evidence" value="ECO:0007669"/>
    <property type="project" value="TreeGrafter"/>
</dbReference>
<dbReference type="CDD" id="cd11365">
    <property type="entry name" value="RNase_PH_archRRP42"/>
    <property type="match status" value="1"/>
</dbReference>
<dbReference type="FunFam" id="3.30.230.70:FF:000017">
    <property type="entry name" value="Exosome complex component Rrp42"/>
    <property type="match status" value="1"/>
</dbReference>
<dbReference type="Gene3D" id="3.30.230.70">
    <property type="entry name" value="GHMP Kinase, N-terminal domain"/>
    <property type="match status" value="1"/>
</dbReference>
<dbReference type="HAMAP" id="MF_00622">
    <property type="entry name" value="Exosome_Rrp42"/>
    <property type="match status" value="1"/>
</dbReference>
<dbReference type="InterPro" id="IPR001247">
    <property type="entry name" value="ExoRNase_PH_dom1"/>
</dbReference>
<dbReference type="InterPro" id="IPR015847">
    <property type="entry name" value="ExoRNase_PH_dom2"/>
</dbReference>
<dbReference type="InterPro" id="IPR036345">
    <property type="entry name" value="ExoRNase_PH_dom2_sf"/>
</dbReference>
<dbReference type="InterPro" id="IPR050590">
    <property type="entry name" value="Exosome_comp_Rrp42_subfam"/>
</dbReference>
<dbReference type="InterPro" id="IPR027408">
    <property type="entry name" value="PNPase/RNase_PH_dom_sf"/>
</dbReference>
<dbReference type="InterPro" id="IPR020568">
    <property type="entry name" value="Ribosomal_Su5_D2-typ_SF"/>
</dbReference>
<dbReference type="InterPro" id="IPR020869">
    <property type="entry name" value="Rrp42_archaea"/>
</dbReference>
<dbReference type="NCBIfam" id="NF003282">
    <property type="entry name" value="PRK04282.1-1"/>
    <property type="match status" value="1"/>
</dbReference>
<dbReference type="PANTHER" id="PTHR11097:SF8">
    <property type="entry name" value="EXOSOME COMPLEX COMPONENT RRP42"/>
    <property type="match status" value="1"/>
</dbReference>
<dbReference type="PANTHER" id="PTHR11097">
    <property type="entry name" value="EXOSOME COMPLEX EXONUCLEASE RIBOSOMAL RNA PROCESSING PROTEIN"/>
    <property type="match status" value="1"/>
</dbReference>
<dbReference type="Pfam" id="PF01138">
    <property type="entry name" value="RNase_PH"/>
    <property type="match status" value="1"/>
</dbReference>
<dbReference type="Pfam" id="PF03725">
    <property type="entry name" value="RNase_PH_C"/>
    <property type="match status" value="1"/>
</dbReference>
<dbReference type="SUPFAM" id="SSF55666">
    <property type="entry name" value="Ribonuclease PH domain 2-like"/>
    <property type="match status" value="1"/>
</dbReference>
<dbReference type="SUPFAM" id="SSF54211">
    <property type="entry name" value="Ribosomal protein S5 domain 2-like"/>
    <property type="match status" value="1"/>
</dbReference>
<sequence>MKKMSEIIATLKKDYIYNLMIKDKRQDGRGFKDFRELKLETNVISKAEGSAKVTLGNTQVLVGVKLQTGTPFPDSQDEGVIITNLELNPIASPEFEPGPPREDAIEMARVVDRGIRESGAIDIKKLCITVGESVWIVFIDVHILNNDGNIIDASCLAAIAALMTTMVPNEQQGLGENVPLAMKEMPVGITLAKIGSKLMVDPSLDEEAVCETKLTIVSSSDGSVAGMQKMGPVPLTEAELFEAIDMAIEKAAEIRGLYLEGLAKSE</sequence>
<feature type="chain" id="PRO_0000139999" description="Exosome complex component Rrp42">
    <location>
        <begin position="1"/>
        <end position="266"/>
    </location>
</feature>
<organism>
    <name type="scientific">Methanosarcina mazei (strain ATCC BAA-159 / DSM 3647 / Goe1 / Go1 / JCM 11833 / OCM 88)</name>
    <name type="common">Methanosarcina frisia</name>
    <dbReference type="NCBI Taxonomy" id="192952"/>
    <lineage>
        <taxon>Archaea</taxon>
        <taxon>Methanobacteriati</taxon>
        <taxon>Methanobacteriota</taxon>
        <taxon>Stenosarchaea group</taxon>
        <taxon>Methanomicrobia</taxon>
        <taxon>Methanosarcinales</taxon>
        <taxon>Methanosarcinaceae</taxon>
        <taxon>Methanosarcina</taxon>
    </lineage>
</organism>